<organism>
    <name type="scientific">Thermomicrobium roseum (strain ATCC 27502 / DSM 5159 / P-2)</name>
    <dbReference type="NCBI Taxonomy" id="309801"/>
    <lineage>
        <taxon>Bacteria</taxon>
        <taxon>Pseudomonadati</taxon>
        <taxon>Thermomicrobiota</taxon>
        <taxon>Thermomicrobia</taxon>
        <taxon>Thermomicrobiales</taxon>
        <taxon>Thermomicrobiaceae</taxon>
        <taxon>Thermomicrobium</taxon>
    </lineage>
</organism>
<comment type="function">
    <text evidence="1">Catalyzes the reversible adenylation of nicotinate mononucleotide (NaMN) to nicotinic acid adenine dinucleotide (NaAD).</text>
</comment>
<comment type="catalytic activity">
    <reaction evidence="1">
        <text>nicotinate beta-D-ribonucleotide + ATP + H(+) = deamido-NAD(+) + diphosphate</text>
        <dbReference type="Rhea" id="RHEA:22860"/>
        <dbReference type="ChEBI" id="CHEBI:15378"/>
        <dbReference type="ChEBI" id="CHEBI:30616"/>
        <dbReference type="ChEBI" id="CHEBI:33019"/>
        <dbReference type="ChEBI" id="CHEBI:57502"/>
        <dbReference type="ChEBI" id="CHEBI:58437"/>
        <dbReference type="EC" id="2.7.7.18"/>
    </reaction>
</comment>
<comment type="pathway">
    <text evidence="1">Cofactor biosynthesis; NAD(+) biosynthesis; deamido-NAD(+) from nicotinate D-ribonucleotide: step 1/1.</text>
</comment>
<comment type="similarity">
    <text evidence="1">Belongs to the NadD family.</text>
</comment>
<reference key="1">
    <citation type="journal article" date="2009" name="PLoS ONE">
        <title>Complete genome sequence of the aerobic CO-oxidizing thermophile Thermomicrobium roseum.</title>
        <authorList>
            <person name="Wu D."/>
            <person name="Raymond J."/>
            <person name="Wu M."/>
            <person name="Chatterji S."/>
            <person name="Ren Q."/>
            <person name="Graham J.E."/>
            <person name="Bryant D.A."/>
            <person name="Robb F."/>
            <person name="Colman A."/>
            <person name="Tallon L.J."/>
            <person name="Badger J.H."/>
            <person name="Madupu R."/>
            <person name="Ward N.L."/>
            <person name="Eisen J.A."/>
        </authorList>
    </citation>
    <scope>NUCLEOTIDE SEQUENCE [LARGE SCALE GENOMIC DNA]</scope>
    <source>
        <strain>ATCC 27502 / DSM 5159 / P-2</strain>
    </source>
</reference>
<proteinExistence type="inferred from homology"/>
<evidence type="ECO:0000255" key="1">
    <source>
        <dbReference type="HAMAP-Rule" id="MF_00244"/>
    </source>
</evidence>
<sequence length="214" mass="23951">MSRLGIFGGTFDPIHHGHLIVAEVLKEELQLSRVLFLPAGQPPHKIGRPITPIAHRLAMLQLALQGNPHFAISYVDVRRPGPCYTVDSLTLLRREYSDAELVFLMGEDSLHDLPTWHEPNRIAELALLGVALRPGIEVDLQTIFARVPAARDRVILVPVPLIQIAASDIRRRVAEGRTIRYQVPLVVEEYIARHGLYRTVEAMMPTMTPRTSGV</sequence>
<keyword id="KW-0067">ATP-binding</keyword>
<keyword id="KW-0520">NAD</keyword>
<keyword id="KW-0547">Nucleotide-binding</keyword>
<keyword id="KW-0548">Nucleotidyltransferase</keyword>
<keyword id="KW-0662">Pyridine nucleotide biosynthesis</keyword>
<keyword id="KW-1185">Reference proteome</keyword>
<keyword id="KW-0808">Transferase</keyword>
<name>NADD_THERP</name>
<protein>
    <recommendedName>
        <fullName evidence="1">Probable nicotinate-nucleotide adenylyltransferase</fullName>
        <ecNumber evidence="1">2.7.7.18</ecNumber>
    </recommendedName>
    <alternativeName>
        <fullName evidence="1">Deamido-NAD(+) diphosphorylase</fullName>
    </alternativeName>
    <alternativeName>
        <fullName evidence="1">Deamido-NAD(+) pyrophosphorylase</fullName>
    </alternativeName>
    <alternativeName>
        <fullName evidence="1">Nicotinate mononucleotide adenylyltransferase</fullName>
        <shortName evidence="1">NaMN adenylyltransferase</shortName>
    </alternativeName>
</protein>
<gene>
    <name evidence="1" type="primary">nadD</name>
    <name type="ordered locus">trd_0651</name>
</gene>
<dbReference type="EC" id="2.7.7.18" evidence="1"/>
<dbReference type="EMBL" id="CP001275">
    <property type="protein sequence ID" value="ACM05781.1"/>
    <property type="molecule type" value="Genomic_DNA"/>
</dbReference>
<dbReference type="RefSeq" id="WP_012642047.1">
    <property type="nucleotide sequence ID" value="NC_011959.1"/>
</dbReference>
<dbReference type="SMR" id="B9KYU7"/>
<dbReference type="STRING" id="309801.trd_0651"/>
<dbReference type="KEGG" id="tro:trd_0651"/>
<dbReference type="eggNOG" id="COG1057">
    <property type="taxonomic scope" value="Bacteria"/>
</dbReference>
<dbReference type="HOGENOM" id="CLU_069765_3_1_0"/>
<dbReference type="OrthoDB" id="5295945at2"/>
<dbReference type="UniPathway" id="UPA00253">
    <property type="reaction ID" value="UER00332"/>
</dbReference>
<dbReference type="Proteomes" id="UP000000447">
    <property type="component" value="Chromosome"/>
</dbReference>
<dbReference type="GO" id="GO:0005524">
    <property type="term" value="F:ATP binding"/>
    <property type="evidence" value="ECO:0007669"/>
    <property type="project" value="UniProtKB-KW"/>
</dbReference>
<dbReference type="GO" id="GO:0004515">
    <property type="term" value="F:nicotinate-nucleotide adenylyltransferase activity"/>
    <property type="evidence" value="ECO:0007669"/>
    <property type="project" value="UniProtKB-UniRule"/>
</dbReference>
<dbReference type="GO" id="GO:0009435">
    <property type="term" value="P:NAD biosynthetic process"/>
    <property type="evidence" value="ECO:0007669"/>
    <property type="project" value="UniProtKB-UniRule"/>
</dbReference>
<dbReference type="CDD" id="cd02165">
    <property type="entry name" value="NMNAT"/>
    <property type="match status" value="1"/>
</dbReference>
<dbReference type="Gene3D" id="3.40.50.620">
    <property type="entry name" value="HUPs"/>
    <property type="match status" value="1"/>
</dbReference>
<dbReference type="HAMAP" id="MF_00244">
    <property type="entry name" value="NaMN_adenylyltr"/>
    <property type="match status" value="1"/>
</dbReference>
<dbReference type="InterPro" id="IPR004821">
    <property type="entry name" value="Cyt_trans-like"/>
</dbReference>
<dbReference type="InterPro" id="IPR005248">
    <property type="entry name" value="NadD/NMNAT"/>
</dbReference>
<dbReference type="InterPro" id="IPR014729">
    <property type="entry name" value="Rossmann-like_a/b/a_fold"/>
</dbReference>
<dbReference type="NCBIfam" id="TIGR00125">
    <property type="entry name" value="cyt_tran_rel"/>
    <property type="match status" value="1"/>
</dbReference>
<dbReference type="NCBIfam" id="TIGR00482">
    <property type="entry name" value="nicotinate (nicotinamide) nucleotide adenylyltransferase"/>
    <property type="match status" value="1"/>
</dbReference>
<dbReference type="NCBIfam" id="NF000840">
    <property type="entry name" value="PRK00071.1-3"/>
    <property type="match status" value="1"/>
</dbReference>
<dbReference type="PANTHER" id="PTHR39321">
    <property type="entry name" value="NICOTINATE-NUCLEOTIDE ADENYLYLTRANSFERASE-RELATED"/>
    <property type="match status" value="1"/>
</dbReference>
<dbReference type="PANTHER" id="PTHR39321:SF3">
    <property type="entry name" value="PHOSPHOPANTETHEINE ADENYLYLTRANSFERASE"/>
    <property type="match status" value="1"/>
</dbReference>
<dbReference type="Pfam" id="PF01467">
    <property type="entry name" value="CTP_transf_like"/>
    <property type="match status" value="1"/>
</dbReference>
<dbReference type="SUPFAM" id="SSF52374">
    <property type="entry name" value="Nucleotidylyl transferase"/>
    <property type="match status" value="1"/>
</dbReference>
<accession>B9KYU7</accession>
<feature type="chain" id="PRO_1000204488" description="Probable nicotinate-nucleotide adenylyltransferase">
    <location>
        <begin position="1"/>
        <end position="214"/>
    </location>
</feature>